<comment type="function">
    <text evidence="1">Catalyzes the irreversible transfer of a propylamine group from the amino donor S-adenosylmethioninamine (decarboxy-AdoMet) to putrescine (1,4-diaminobutane) to yield spermidine.</text>
</comment>
<comment type="catalytic activity">
    <reaction evidence="1">
        <text>S-adenosyl 3-(methylsulfanyl)propylamine + putrescine = S-methyl-5'-thioadenosine + spermidine + H(+)</text>
        <dbReference type="Rhea" id="RHEA:12721"/>
        <dbReference type="ChEBI" id="CHEBI:15378"/>
        <dbReference type="ChEBI" id="CHEBI:17509"/>
        <dbReference type="ChEBI" id="CHEBI:57443"/>
        <dbReference type="ChEBI" id="CHEBI:57834"/>
        <dbReference type="ChEBI" id="CHEBI:326268"/>
        <dbReference type="EC" id="2.5.1.16"/>
    </reaction>
</comment>
<comment type="pathway">
    <text evidence="1">Amine and polyamine biosynthesis; spermidine biosynthesis; spermidine from putrescine: step 1/1.</text>
</comment>
<comment type="subunit">
    <text evidence="1">Homodimer or homotetramer.</text>
</comment>
<comment type="subcellular location">
    <subcellularLocation>
        <location evidence="1">Cytoplasm</location>
    </subcellularLocation>
</comment>
<comment type="similarity">
    <text evidence="1">Belongs to the spermidine/spermine synthase family.</text>
</comment>
<proteinExistence type="inferred from homology"/>
<reference key="1">
    <citation type="submission" date="2008-05" db="EMBL/GenBank/DDBJ databases">
        <title>Complete genome sequence of Clostridium botulinum E3 str. Alaska E43.</title>
        <authorList>
            <person name="Brinkac L.M."/>
            <person name="Brown J.L."/>
            <person name="Bruce D."/>
            <person name="Detter C."/>
            <person name="Munk C."/>
            <person name="Smith L.A."/>
            <person name="Smith T.J."/>
            <person name="Sutton G."/>
            <person name="Brettin T.S."/>
        </authorList>
    </citation>
    <scope>NUCLEOTIDE SEQUENCE [LARGE SCALE GENOMIC DNA]</scope>
    <source>
        <strain>Alaska E43 / Type E3</strain>
    </source>
</reference>
<organism>
    <name type="scientific">Clostridium botulinum (strain Alaska E43 / Type E3)</name>
    <dbReference type="NCBI Taxonomy" id="508767"/>
    <lineage>
        <taxon>Bacteria</taxon>
        <taxon>Bacillati</taxon>
        <taxon>Bacillota</taxon>
        <taxon>Clostridia</taxon>
        <taxon>Eubacteriales</taxon>
        <taxon>Clostridiaceae</taxon>
        <taxon>Clostridium</taxon>
    </lineage>
</organism>
<keyword id="KW-0963">Cytoplasm</keyword>
<keyword id="KW-0620">Polyamine biosynthesis</keyword>
<keyword id="KW-0745">Spermidine biosynthesis</keyword>
<keyword id="KW-0808">Transferase</keyword>
<sequence>MELWYTEKHTEDVKFSIRVDRELYTEQSKFQRIDILESKEFGRFFTLDGLMMVTEKDEFIYHDMIVHVPMATNPNIKKVLVIGAGDGGTIRELTRYKTIEKIDMVEIDESVVEACKKYLPKTACKLEEERVNIVYEDGLKFVRNKENDYDLIIVDSTDPFGPGEGLFTKEFYGNCYKALSEDGILVNQHESPYYEYYAKSMKDAHEKIQGLFKINKVYQAHIPTYPSGHWLFGFASKKYDPIKDLNVEAWKSLGIQTKYYNTDLHVGCFALPTYVIDMLNEDKE</sequence>
<name>SPEE_CLOBA</name>
<accession>B2V328</accession>
<gene>
    <name evidence="1" type="primary">speE</name>
    <name type="ordered locus">CLH_0947</name>
</gene>
<protein>
    <recommendedName>
        <fullName evidence="1">Polyamine aminopropyltransferase</fullName>
    </recommendedName>
    <alternativeName>
        <fullName evidence="1">Putrescine aminopropyltransferase</fullName>
        <shortName evidence="1">PAPT</shortName>
    </alternativeName>
    <alternativeName>
        <fullName evidence="1">Spermidine synthase</fullName>
        <shortName evidence="1">SPDS</shortName>
        <shortName evidence="1">SPDSY</shortName>
        <ecNumber evidence="1">2.5.1.16</ecNumber>
    </alternativeName>
</protein>
<evidence type="ECO:0000255" key="1">
    <source>
        <dbReference type="HAMAP-Rule" id="MF_00198"/>
    </source>
</evidence>
<dbReference type="EC" id="2.5.1.16" evidence="1"/>
<dbReference type="EMBL" id="CP001078">
    <property type="protein sequence ID" value="ACD52485.1"/>
    <property type="molecule type" value="Genomic_DNA"/>
</dbReference>
<dbReference type="RefSeq" id="WP_012450620.1">
    <property type="nucleotide sequence ID" value="NC_010723.1"/>
</dbReference>
<dbReference type="SMR" id="B2V328"/>
<dbReference type="KEGG" id="cbt:CLH_0947"/>
<dbReference type="HOGENOM" id="CLU_048199_0_0_9"/>
<dbReference type="UniPathway" id="UPA00248">
    <property type="reaction ID" value="UER00314"/>
</dbReference>
<dbReference type="GO" id="GO:0005829">
    <property type="term" value="C:cytosol"/>
    <property type="evidence" value="ECO:0007669"/>
    <property type="project" value="TreeGrafter"/>
</dbReference>
<dbReference type="GO" id="GO:0004766">
    <property type="term" value="F:spermidine synthase activity"/>
    <property type="evidence" value="ECO:0007669"/>
    <property type="project" value="UniProtKB-UniRule"/>
</dbReference>
<dbReference type="GO" id="GO:0008295">
    <property type="term" value="P:spermidine biosynthetic process"/>
    <property type="evidence" value="ECO:0007669"/>
    <property type="project" value="UniProtKB-UniRule"/>
</dbReference>
<dbReference type="CDD" id="cd02440">
    <property type="entry name" value="AdoMet_MTases"/>
    <property type="match status" value="1"/>
</dbReference>
<dbReference type="Gene3D" id="2.30.140.10">
    <property type="entry name" value="Spermidine synthase, tetramerisation domain"/>
    <property type="match status" value="1"/>
</dbReference>
<dbReference type="Gene3D" id="3.40.50.150">
    <property type="entry name" value="Vaccinia Virus protein VP39"/>
    <property type="match status" value="1"/>
</dbReference>
<dbReference type="HAMAP" id="MF_00198">
    <property type="entry name" value="Spermidine_synth"/>
    <property type="match status" value="1"/>
</dbReference>
<dbReference type="InterPro" id="IPR030374">
    <property type="entry name" value="PABS"/>
</dbReference>
<dbReference type="InterPro" id="IPR029063">
    <property type="entry name" value="SAM-dependent_MTases_sf"/>
</dbReference>
<dbReference type="InterPro" id="IPR001045">
    <property type="entry name" value="Spermi_synthase"/>
</dbReference>
<dbReference type="InterPro" id="IPR035246">
    <property type="entry name" value="Spermidine_synt_N"/>
</dbReference>
<dbReference type="InterPro" id="IPR037163">
    <property type="entry name" value="Spermidine_synt_N_sf"/>
</dbReference>
<dbReference type="NCBIfam" id="NF002010">
    <property type="entry name" value="PRK00811.1"/>
    <property type="match status" value="1"/>
</dbReference>
<dbReference type="NCBIfam" id="TIGR00417">
    <property type="entry name" value="speE"/>
    <property type="match status" value="1"/>
</dbReference>
<dbReference type="PANTHER" id="PTHR11558:SF11">
    <property type="entry name" value="SPERMIDINE SYNTHASE"/>
    <property type="match status" value="1"/>
</dbReference>
<dbReference type="PANTHER" id="PTHR11558">
    <property type="entry name" value="SPERMIDINE/SPERMINE SYNTHASE"/>
    <property type="match status" value="1"/>
</dbReference>
<dbReference type="Pfam" id="PF17284">
    <property type="entry name" value="Spermine_synt_N"/>
    <property type="match status" value="1"/>
</dbReference>
<dbReference type="Pfam" id="PF01564">
    <property type="entry name" value="Spermine_synth"/>
    <property type="match status" value="1"/>
</dbReference>
<dbReference type="SUPFAM" id="SSF53335">
    <property type="entry name" value="S-adenosyl-L-methionine-dependent methyltransferases"/>
    <property type="match status" value="1"/>
</dbReference>
<dbReference type="PROSITE" id="PS51006">
    <property type="entry name" value="PABS_2"/>
    <property type="match status" value="1"/>
</dbReference>
<feature type="chain" id="PRO_1000099278" description="Polyamine aminopropyltransferase">
    <location>
        <begin position="1"/>
        <end position="284"/>
    </location>
</feature>
<feature type="domain" description="PABS" evidence="1">
    <location>
        <begin position="2"/>
        <end position="237"/>
    </location>
</feature>
<feature type="active site" description="Proton acceptor" evidence="1">
    <location>
        <position position="155"/>
    </location>
</feature>
<feature type="binding site" evidence="1">
    <location>
        <position position="31"/>
    </location>
    <ligand>
        <name>S-methyl-5'-thioadenosine</name>
        <dbReference type="ChEBI" id="CHEBI:17509"/>
    </ligand>
</feature>
<feature type="binding site" evidence="1">
    <location>
        <position position="62"/>
    </location>
    <ligand>
        <name>spermidine</name>
        <dbReference type="ChEBI" id="CHEBI:57834"/>
    </ligand>
</feature>
<feature type="binding site" evidence="1">
    <location>
        <position position="86"/>
    </location>
    <ligand>
        <name>spermidine</name>
        <dbReference type="ChEBI" id="CHEBI:57834"/>
    </ligand>
</feature>
<feature type="binding site" evidence="1">
    <location>
        <position position="106"/>
    </location>
    <ligand>
        <name>S-methyl-5'-thioadenosine</name>
        <dbReference type="ChEBI" id="CHEBI:17509"/>
    </ligand>
</feature>
<feature type="binding site" evidence="1">
    <location>
        <begin position="137"/>
        <end position="138"/>
    </location>
    <ligand>
        <name>S-methyl-5'-thioadenosine</name>
        <dbReference type="ChEBI" id="CHEBI:17509"/>
    </ligand>
</feature>
<feature type="binding site" evidence="1">
    <location>
        <begin position="155"/>
        <end position="158"/>
    </location>
    <ligand>
        <name>spermidine</name>
        <dbReference type="ChEBI" id="CHEBI:57834"/>
    </ligand>
</feature>
<feature type="binding site" evidence="1">
    <location>
        <position position="162"/>
    </location>
    <ligand>
        <name>S-methyl-5'-thioadenosine</name>
        <dbReference type="ChEBI" id="CHEBI:17509"/>
    </ligand>
</feature>